<keyword id="KW-1267">Proteomics identification</keyword>
<keyword id="KW-0676">Redox-active center</keyword>
<keyword id="KW-1185">Reference proteome</keyword>
<keyword id="KW-0712">Selenocysteine</keyword>
<keyword id="KW-0832">Ubl conjugation</keyword>
<name>SELV_HUMAN</name>
<proteinExistence type="evidence at protein level"/>
<sequence length="346" mass="36800">MNNQARTPAPSSARTSTSVRASTPTRTPTPLRTPTPVRTRTPIRTLTPVLTPSPAGTSPLVLTPAPAQIPTLVPTPALARIPRLVPPPAPAWIPTPVPTPVPVRNPTPVPTPARTLTPPVRVPAPAPAQLLAGIRAALPVLDSYLAPALPLDPPPEPAPELPLLPEEDPEPAPSLKLIPSVSSEAGPAPGPLPTRTPLAANSPGPTLDFTFRADPSAIGLADPPIPSPVPSPILGTIPSAISLQNCTETFPSSSENFALDKRVLIRVTYCGLUSYSLRYILLKKSLEQQFPNHLLFEEDRAAQATGEFEVFVNGRLVHSKKRGDGFVNESRLQKIVSVIDEEIKKR</sequence>
<feature type="chain" id="PRO_0000097675" description="Selenoprotein V">
    <location>
        <begin position="1"/>
        <end position="346"/>
    </location>
</feature>
<feature type="region of interest" description="Disordered" evidence="2">
    <location>
        <begin position="1"/>
        <end position="40"/>
    </location>
</feature>
<feature type="region of interest" description="Disordered" evidence="2">
    <location>
        <begin position="151"/>
        <end position="206"/>
    </location>
</feature>
<feature type="compositionally biased region" description="Pro residues" evidence="2">
    <location>
        <begin position="151"/>
        <end position="162"/>
    </location>
</feature>
<feature type="non-standard amino acid" description="Selenocysteine" evidence="8">
    <location>
        <position position="273"/>
    </location>
</feature>
<feature type="cross-link" description="Cysteinyl-selenocysteine (Cys-Sec); redox-active" evidence="1">
    <location>
        <begin position="270"/>
        <end position="273"/>
    </location>
</feature>
<feature type="sequence variant" id="VAR_061790" description="In dbSNP:rs56149652.">
    <original>K</original>
    <variation>R</variation>
    <location>
        <position position="284"/>
    </location>
</feature>
<protein>
    <recommendedName>
        <fullName evidence="6">Selenoprotein V</fullName>
        <shortName evidence="6">SelV</shortName>
    </recommendedName>
</protein>
<gene>
    <name evidence="6 9" type="primary">SELENOV</name>
    <name evidence="5" type="synonym">SELV</name>
</gene>
<dbReference type="EMBL" id="AY324825">
    <property type="protein sequence ID" value="AAP85542.1"/>
    <property type="molecule type" value="mRNA"/>
</dbReference>
<dbReference type="EMBL" id="BC117331">
    <property type="protein sequence ID" value="AAI17332.1"/>
    <property type="molecule type" value="mRNA"/>
</dbReference>
<dbReference type="CCDS" id="CCDS54266.1"/>
<dbReference type="RefSeq" id="NP_874363.1">
    <property type="nucleotide sequence ID" value="NM_182704.2"/>
</dbReference>
<dbReference type="BioGRID" id="131519">
    <property type="interactions" value="12"/>
</dbReference>
<dbReference type="FunCoup" id="P59797">
    <property type="interactions" value="1"/>
</dbReference>
<dbReference type="IntAct" id="P59797">
    <property type="interactions" value="10"/>
</dbReference>
<dbReference type="STRING" id="9606.ENSP00000333956"/>
<dbReference type="GlyGen" id="P59797">
    <property type="glycosylation" value="3 sites"/>
</dbReference>
<dbReference type="iPTMnet" id="P59797"/>
<dbReference type="PhosphoSitePlus" id="P59797"/>
<dbReference type="BioMuta" id="SELENOV"/>
<dbReference type="DMDM" id="190358771"/>
<dbReference type="jPOST" id="P59797"/>
<dbReference type="MassIVE" id="P59797"/>
<dbReference type="PaxDb" id="9606-ENSP00000333956"/>
<dbReference type="PeptideAtlas" id="P59797"/>
<dbReference type="ProteomicsDB" id="57160"/>
<dbReference type="Antibodypedia" id="66930">
    <property type="antibodies" value="58 antibodies from 12 providers"/>
</dbReference>
<dbReference type="DNASU" id="348303"/>
<dbReference type="Ensembl" id="ENST00000335426.9">
    <property type="protein sequence ID" value="ENSP00000333956.4"/>
    <property type="gene ID" value="ENSG00000186838.15"/>
</dbReference>
<dbReference type="GeneID" id="348303"/>
<dbReference type="KEGG" id="hsa:348303"/>
<dbReference type="MANE-Select" id="ENST00000335426.9">
    <property type="protein sequence ID" value="ENSP00000333956.4"/>
    <property type="RefSeq nucleotide sequence ID" value="NM_182704.2"/>
    <property type="RefSeq protein sequence ID" value="NP_874363.1"/>
</dbReference>
<dbReference type="AGR" id="HGNC:30399"/>
<dbReference type="CTD" id="348303"/>
<dbReference type="DisGeNET" id="348303"/>
<dbReference type="GeneCards" id="SELENOV"/>
<dbReference type="HGNC" id="HGNC:30399">
    <property type="gene designation" value="SELENOV"/>
</dbReference>
<dbReference type="HPA" id="ENSG00000186838">
    <property type="expression patterns" value="Tissue enriched (testis)"/>
</dbReference>
<dbReference type="MIM" id="607919">
    <property type="type" value="gene"/>
</dbReference>
<dbReference type="neXtProt" id="NX_P59797"/>
<dbReference type="OpenTargets" id="ENSG00000186838"/>
<dbReference type="VEuPathDB" id="HostDB:ENSG00000186838"/>
<dbReference type="eggNOG" id="ENOG502S9W8">
    <property type="taxonomic scope" value="Eukaryota"/>
</dbReference>
<dbReference type="GeneTree" id="ENSGT00940000163358"/>
<dbReference type="InParanoid" id="P59797"/>
<dbReference type="OMA" id="YCGLXSY"/>
<dbReference type="OrthoDB" id="444492at2759"/>
<dbReference type="PAN-GO" id="P59797">
    <property type="GO annotations" value="2 GO annotations based on evolutionary models"/>
</dbReference>
<dbReference type="PhylomeDB" id="P59797"/>
<dbReference type="PathwayCommons" id="P59797"/>
<dbReference type="SignaLink" id="P59797"/>
<dbReference type="BioGRID-ORCS" id="348303">
    <property type="hits" value="8 hits in 1104 CRISPR screens"/>
</dbReference>
<dbReference type="ChiTaRS" id="SELENOV">
    <property type="organism name" value="human"/>
</dbReference>
<dbReference type="GenomeRNAi" id="348303"/>
<dbReference type="Pharos" id="P59797">
    <property type="development level" value="Tdark"/>
</dbReference>
<dbReference type="PRO" id="PR:P59797"/>
<dbReference type="Proteomes" id="UP000005640">
    <property type="component" value="Chromosome 19"/>
</dbReference>
<dbReference type="RNAct" id="P59797">
    <property type="molecule type" value="protein"/>
</dbReference>
<dbReference type="Bgee" id="ENSG00000186838">
    <property type="expression patterns" value="Expressed in left testis and 47 other cell types or tissues"/>
</dbReference>
<dbReference type="ExpressionAtlas" id="P59797">
    <property type="expression patterns" value="baseline and differential"/>
</dbReference>
<dbReference type="GO" id="GO:0005829">
    <property type="term" value="C:cytosol"/>
    <property type="evidence" value="ECO:0000318"/>
    <property type="project" value="GO_Central"/>
</dbReference>
<dbReference type="GO" id="GO:0010269">
    <property type="term" value="P:response to selenium ion"/>
    <property type="evidence" value="ECO:0000318"/>
    <property type="project" value="GO_Central"/>
</dbReference>
<dbReference type="FunFam" id="3.40.30.10:FF:000220">
    <property type="entry name" value="Selenoprotein V"/>
    <property type="match status" value="1"/>
</dbReference>
<dbReference type="Gene3D" id="3.40.30.10">
    <property type="entry name" value="Glutaredoxin"/>
    <property type="match status" value="1"/>
</dbReference>
<dbReference type="InterPro" id="IPR011893">
    <property type="entry name" value="Selenoprotein_Rdx-typ"/>
</dbReference>
<dbReference type="InterPro" id="IPR051441">
    <property type="entry name" value="SelW_related"/>
</dbReference>
<dbReference type="InterPro" id="IPR036249">
    <property type="entry name" value="Thioredoxin-like_sf"/>
</dbReference>
<dbReference type="NCBIfam" id="TIGR02174">
    <property type="entry name" value="CXXU_selWTH"/>
    <property type="match status" value="1"/>
</dbReference>
<dbReference type="PANTHER" id="PTHR15124">
    <property type="entry name" value="SELENOPROTEIN W"/>
    <property type="match status" value="1"/>
</dbReference>
<dbReference type="PANTHER" id="PTHR15124:SF16">
    <property type="entry name" value="SELENOPROTEIN W"/>
    <property type="match status" value="1"/>
</dbReference>
<dbReference type="Pfam" id="PF10262">
    <property type="entry name" value="Rdx"/>
    <property type="match status" value="1"/>
</dbReference>
<dbReference type="PRINTS" id="PR01217">
    <property type="entry name" value="PRICHEXTENSN"/>
</dbReference>
<dbReference type="SUPFAM" id="SSF52833">
    <property type="entry name" value="Thioredoxin-like"/>
    <property type="match status" value="1"/>
</dbReference>
<comment type="function">
    <text evidence="7">May be involved in a redox-related process.</text>
</comment>
<comment type="interaction">
    <interactant intactId="EBI-10216195">
        <id>P59797</id>
    </interactant>
    <interactant intactId="EBI-743771">
        <id>Q92624</id>
        <label>APPBP2</label>
    </interactant>
    <organismsDiffer>false</organismsDiffer>
    <experiments>3</experiments>
</comment>
<comment type="interaction">
    <interactant intactId="EBI-10216195">
        <id>P59797</id>
    </interactant>
    <interactant intactId="EBI-743105">
        <id>Q5JVL4</id>
        <label>EFHC1</label>
    </interactant>
    <organismsDiffer>false</organismsDiffer>
    <experiments>3</experiments>
</comment>
<comment type="interaction">
    <interactant intactId="EBI-10216195">
        <id>P59797</id>
    </interactant>
    <interactant intactId="EBI-618309">
        <id>Q08379</id>
        <label>GOLGA2</label>
    </interactant>
    <organismsDiffer>false</organismsDiffer>
    <experiments>3</experiments>
</comment>
<comment type="interaction">
    <interactant intactId="EBI-10216195">
        <id>P59797</id>
    </interactant>
    <interactant intactId="EBI-7116203">
        <id>O75031</id>
        <label>HSF2BP</label>
    </interactant>
    <organismsDiffer>false</organismsDiffer>
    <experiments>3</experiments>
</comment>
<comment type="interaction">
    <interactant intactId="EBI-10216195">
        <id>P59797</id>
    </interactant>
    <interactant intactId="EBI-741158">
        <id>Q96HA8</id>
        <label>NTAQ1</label>
    </interactant>
    <organismsDiffer>false</organismsDiffer>
    <experiments>3</experiments>
</comment>
<comment type="interaction">
    <interactant intactId="EBI-10216195">
        <id>P59797</id>
    </interactant>
    <interactant intactId="EBI-714158">
        <id>Q13526</id>
        <label>PIN1</label>
    </interactant>
    <organismsDiffer>false</organismsDiffer>
    <experiments>3</experiments>
</comment>
<comment type="interaction">
    <interactant intactId="EBI-10216195">
        <id>P59797</id>
    </interactant>
    <interactant intactId="EBI-10172814">
        <id>P86479</id>
        <label>PRR20C</label>
    </interactant>
    <organismsDiffer>false</organismsDiffer>
    <experiments>3</experiments>
</comment>
<comment type="interaction">
    <interactant intactId="EBI-10216195">
        <id>P59797</id>
    </interactant>
    <interactant intactId="EBI-2798044">
        <id>Q2TAL8</id>
        <label>QRICH1</label>
    </interactant>
    <organismsDiffer>false</organismsDiffer>
    <experiments>3</experiments>
</comment>
<comment type="interaction">
    <interactant intactId="EBI-10216195">
        <id>P59797</id>
    </interactant>
    <interactant intactId="EBI-10182121">
        <id>Q8NF64-2</id>
        <label>ZMIZ2</label>
    </interactant>
    <organismsDiffer>false</organismsDiffer>
    <experiments>3</experiments>
</comment>
<comment type="interaction">
    <interactant intactId="EBI-10216195">
        <id>P59797</id>
    </interactant>
    <interactant intactId="EBI-746595">
        <id>Q96E35</id>
        <label>ZMYND19</label>
    </interactant>
    <organismsDiffer>false</organismsDiffer>
    <experiments>6</experiments>
</comment>
<comment type="tissue specificity">
    <text evidence="3">Testis specific.</text>
</comment>
<comment type="PTM">
    <text evidence="4">Truncated SELENOV proteins produced by failed UGA/Sec decoding are ubiquitinated by the CRL2(APPBP2) complex, which recognizes the glycine (Gly) at the C-terminus of truncated SELENOV proteins.</text>
</comment>
<comment type="similarity">
    <text evidence="7">Belongs to the SelWTH family.</text>
</comment>
<evidence type="ECO:0000250" key="1"/>
<evidence type="ECO:0000256" key="2">
    <source>
        <dbReference type="SAM" id="MobiDB-lite"/>
    </source>
</evidence>
<evidence type="ECO:0000269" key="3">
    <source>
    </source>
</evidence>
<evidence type="ECO:0000269" key="4">
    <source>
    </source>
</evidence>
<evidence type="ECO:0000303" key="5">
    <source>
    </source>
</evidence>
<evidence type="ECO:0000303" key="6">
    <source>
    </source>
</evidence>
<evidence type="ECO:0000305" key="7"/>
<evidence type="ECO:0000305" key="8">
    <source>
    </source>
</evidence>
<evidence type="ECO:0000312" key="9">
    <source>
        <dbReference type="HGNC" id="HGNC:30399"/>
    </source>
</evidence>
<reference key="1">
    <citation type="journal article" date="2003" name="Science">
        <title>Characterization of mammalian selenoproteomes.</title>
        <authorList>
            <person name="Kryukov G.V."/>
            <person name="Castellano S."/>
            <person name="Novoselov S.V."/>
            <person name="Lobanov A.V."/>
            <person name="Zehtab O."/>
            <person name="Guigo R."/>
            <person name="Gladyshev V.N."/>
        </authorList>
    </citation>
    <scope>NUCLEOTIDE SEQUENCE [MRNA]</scope>
    <scope>TISSUE SPECIFICITY</scope>
</reference>
<reference key="2">
    <citation type="journal article" date="2004" name="Genome Res.">
        <title>The status, quality, and expansion of the NIH full-length cDNA project: the Mammalian Gene Collection (MGC).</title>
        <authorList>
            <consortium name="The MGC Project Team"/>
        </authorList>
    </citation>
    <scope>NUCLEOTIDE SEQUENCE [LARGE SCALE MRNA]</scope>
</reference>
<reference key="3">
    <citation type="journal article" date="2016" name="J. Biol. Chem.">
        <title>Selenoprotein gene nomenclature.</title>
        <authorList>
            <person name="Gladyshev V.N."/>
            <person name="Arner E.S."/>
            <person name="Berry M.J."/>
            <person name="Brigelius-Flohe R."/>
            <person name="Bruford E.A."/>
            <person name="Burk R.F."/>
            <person name="Carlson B.A."/>
            <person name="Castellano S."/>
            <person name="Chavatte L."/>
            <person name="Conrad M."/>
            <person name="Copeland P.R."/>
            <person name="Diamond A.M."/>
            <person name="Driscoll D.M."/>
            <person name="Ferreiro A."/>
            <person name="Flohe L."/>
            <person name="Green F.R."/>
            <person name="Guigo R."/>
            <person name="Handy D.E."/>
            <person name="Hatfield D.L."/>
            <person name="Hesketh J."/>
            <person name="Hoffmann P.R."/>
            <person name="Holmgren A."/>
            <person name="Hondal R.J."/>
            <person name="Howard M.T."/>
            <person name="Huang K."/>
            <person name="Kim H.Y."/>
            <person name="Kim I.Y."/>
            <person name="Koehrle J."/>
            <person name="Krol A."/>
            <person name="Kryukov G.V."/>
            <person name="Lee B.J."/>
            <person name="Lee B.C."/>
            <person name="Lei X.G."/>
            <person name="Liu Q."/>
            <person name="Lescure A."/>
            <person name="Lobanov A.V."/>
            <person name="Loscalzo J."/>
            <person name="Maiorino M."/>
            <person name="Mariotti M."/>
            <person name="Sandeep Prabhu K."/>
            <person name="Rayman M.P."/>
            <person name="Rozovsky S."/>
            <person name="Salinas G."/>
            <person name="Schmidt E.E."/>
            <person name="Schomburg L."/>
            <person name="Schweizer U."/>
            <person name="Simonovic M."/>
            <person name="Sunde R.A."/>
            <person name="Tsuji P.A."/>
            <person name="Tweedie S."/>
            <person name="Ursini F."/>
            <person name="Whanger P.D."/>
            <person name="Zhang Y."/>
        </authorList>
    </citation>
    <scope>NOMENCLATURE</scope>
</reference>
<reference key="4">
    <citation type="journal article" date="2015" name="Science">
        <title>SELENOPROTEINS. CRL2 aids elimination of truncated selenoproteins produced by failed UGA/Sec decoding.</title>
        <authorList>
            <person name="Lin H.C."/>
            <person name="Ho S.C."/>
            <person name="Chen Y.Y."/>
            <person name="Khoo K.H."/>
            <person name="Hsu P.H."/>
            <person name="Yen H.C."/>
        </authorList>
    </citation>
    <scope>UBIQUITINATION</scope>
</reference>
<organism>
    <name type="scientific">Homo sapiens</name>
    <name type="common">Human</name>
    <dbReference type="NCBI Taxonomy" id="9606"/>
    <lineage>
        <taxon>Eukaryota</taxon>
        <taxon>Metazoa</taxon>
        <taxon>Chordata</taxon>
        <taxon>Craniata</taxon>
        <taxon>Vertebrata</taxon>
        <taxon>Euteleostomi</taxon>
        <taxon>Mammalia</taxon>
        <taxon>Eutheria</taxon>
        <taxon>Euarchontoglires</taxon>
        <taxon>Primates</taxon>
        <taxon>Haplorrhini</taxon>
        <taxon>Catarrhini</taxon>
        <taxon>Hominidae</taxon>
        <taxon>Homo</taxon>
    </lineage>
</organism>
<accession>P59797</accession>
<accession>Q17RG5</accession>